<evidence type="ECO:0000255" key="1">
    <source>
        <dbReference type="HAMAP-Rule" id="MF_01588"/>
    </source>
</evidence>
<sequence length="669" mass="76413">MGKDIKDEILSLRDAIKKWDREYYVDSSPTVGDVTYDKALLRLQYLENRYPEYKTLDSPTLKFGSDLLNDFKEIEHSYPILSLDKAYDVKELLLWVEKMSLEGSNLGFDMGISAEPKIDGCSIVLYYKDGILEKALTRGDGRFGNNVIENVRTIKNVPLCIGERVELVLRGEIYITKKDFLKINHTLDDSYINARNLTSGILRRINSREVVNFPLDIFVYDILYSSLKLNTNHDAFDKLKHFGFKLNPFCKFFCGKNLGENIINYVKEIEEQRERFEYEIDGVVLKVNDFRLRDVLGYTSHHPKWSIAYKFESLRAVSKVIDIVVQVGRSGKITPVANIEKVLIAGAFITSASLHNQDYIDSIGLNVKDVVAISRRGDVIPAVELVVEKLSVGNFKIPNYCPSCKKSLIKEGAHLFCVNIHCPLKIMGHIKYFCSKKCMNIVGLSEKTIEFLFNMNFISSEIDLYTFDFDRLIGLKGFNFKRVNKLKRSIEESKNRPFKKLLLAMGIKDLGINTILLLINNNLNSFDAISLLCQDNKNALVKLLDIKGIGERIAFNIIRAFNDKIILDKFNFFKKLGFKMQEDSMNCVIDSSFLFGKKFCITGSFDEYSRHVLIDKITKKGAIFHSAVSRYLDFLLVGKSPGLKLKKANNLGIKILSLFDIKNLVNLDD</sequence>
<comment type="function">
    <text evidence="1">DNA ligase that catalyzes the formation of phosphodiester linkages between 5'-phosphoryl and 3'-hydroxyl groups in double-stranded DNA using NAD as a coenzyme and as the energy source for the reaction. It is essential for DNA replication and repair of damaged DNA.</text>
</comment>
<comment type="catalytic activity">
    <reaction evidence="1">
        <text>NAD(+) + (deoxyribonucleotide)n-3'-hydroxyl + 5'-phospho-(deoxyribonucleotide)m = (deoxyribonucleotide)n+m + AMP + beta-nicotinamide D-nucleotide.</text>
        <dbReference type="EC" id="6.5.1.2"/>
    </reaction>
</comment>
<comment type="cofactor">
    <cofactor evidence="1">
        <name>Mg(2+)</name>
        <dbReference type="ChEBI" id="CHEBI:18420"/>
    </cofactor>
    <cofactor evidence="1">
        <name>Mn(2+)</name>
        <dbReference type="ChEBI" id="CHEBI:29035"/>
    </cofactor>
</comment>
<comment type="similarity">
    <text evidence="1">Belongs to the NAD-dependent DNA ligase family. LigA subfamily.</text>
</comment>
<gene>
    <name evidence="1" type="primary">ligA</name>
    <name type="ordered locus">BRE_557</name>
</gene>
<reference key="1">
    <citation type="journal article" date="2008" name="PLoS Genet.">
        <title>The genome of Borrelia recurrentis, the agent of deadly louse-borne relapsing fever, is a degraded subset of tick-borne Borrelia duttonii.</title>
        <authorList>
            <person name="Lescot M."/>
            <person name="Audic S."/>
            <person name="Robert C."/>
            <person name="Nguyen T.T."/>
            <person name="Blanc G."/>
            <person name="Cutler S.J."/>
            <person name="Wincker P."/>
            <person name="Couloux A."/>
            <person name="Claverie J.-M."/>
            <person name="Raoult D."/>
            <person name="Drancourt M."/>
        </authorList>
    </citation>
    <scope>NUCLEOTIDE SEQUENCE [LARGE SCALE GENOMIC DNA]</scope>
    <source>
        <strain>A1</strain>
    </source>
</reference>
<protein>
    <recommendedName>
        <fullName evidence="1">DNA ligase</fullName>
        <ecNumber evidence="1">6.5.1.2</ecNumber>
    </recommendedName>
    <alternativeName>
        <fullName evidence="1">Polydeoxyribonucleotide synthase [NAD(+)]</fullName>
    </alternativeName>
</protein>
<organism>
    <name type="scientific">Borrelia recurrentis (strain A1)</name>
    <dbReference type="NCBI Taxonomy" id="412418"/>
    <lineage>
        <taxon>Bacteria</taxon>
        <taxon>Pseudomonadati</taxon>
        <taxon>Spirochaetota</taxon>
        <taxon>Spirochaetia</taxon>
        <taxon>Spirochaetales</taxon>
        <taxon>Borreliaceae</taxon>
        <taxon>Borrelia</taxon>
    </lineage>
</organism>
<proteinExistence type="inferred from homology"/>
<keyword id="KW-0227">DNA damage</keyword>
<keyword id="KW-0234">DNA repair</keyword>
<keyword id="KW-0235">DNA replication</keyword>
<keyword id="KW-0436">Ligase</keyword>
<keyword id="KW-0460">Magnesium</keyword>
<keyword id="KW-0464">Manganese</keyword>
<keyword id="KW-0479">Metal-binding</keyword>
<keyword id="KW-0520">NAD</keyword>
<keyword id="KW-0862">Zinc</keyword>
<accession>B5RPQ2</accession>
<dbReference type="EC" id="6.5.1.2" evidence="1"/>
<dbReference type="EMBL" id="CP000993">
    <property type="protein sequence ID" value="ACH94786.1"/>
    <property type="molecule type" value="Genomic_DNA"/>
</dbReference>
<dbReference type="RefSeq" id="WP_012538983.1">
    <property type="nucleotide sequence ID" value="NC_011244.1"/>
</dbReference>
<dbReference type="SMR" id="B5RPQ2"/>
<dbReference type="KEGG" id="bre:BRE_557"/>
<dbReference type="HOGENOM" id="CLU_007764_2_0_12"/>
<dbReference type="Proteomes" id="UP000000612">
    <property type="component" value="Chromosome"/>
</dbReference>
<dbReference type="GO" id="GO:0003911">
    <property type="term" value="F:DNA ligase (NAD+) activity"/>
    <property type="evidence" value="ECO:0007669"/>
    <property type="project" value="UniProtKB-UniRule"/>
</dbReference>
<dbReference type="GO" id="GO:0046872">
    <property type="term" value="F:metal ion binding"/>
    <property type="evidence" value="ECO:0007669"/>
    <property type="project" value="UniProtKB-KW"/>
</dbReference>
<dbReference type="GO" id="GO:0006281">
    <property type="term" value="P:DNA repair"/>
    <property type="evidence" value="ECO:0007669"/>
    <property type="project" value="UniProtKB-KW"/>
</dbReference>
<dbReference type="GO" id="GO:0006260">
    <property type="term" value="P:DNA replication"/>
    <property type="evidence" value="ECO:0007669"/>
    <property type="project" value="UniProtKB-KW"/>
</dbReference>
<dbReference type="CDD" id="cd17748">
    <property type="entry name" value="BRCT_DNA_ligase_like"/>
    <property type="match status" value="1"/>
</dbReference>
<dbReference type="CDD" id="cd00114">
    <property type="entry name" value="LIGANc"/>
    <property type="match status" value="1"/>
</dbReference>
<dbReference type="Gene3D" id="1.10.150.20">
    <property type="entry name" value="5' to 3' exonuclease, C-terminal subdomain"/>
    <property type="match status" value="2"/>
</dbReference>
<dbReference type="Gene3D" id="3.40.50.10190">
    <property type="entry name" value="BRCT domain"/>
    <property type="match status" value="1"/>
</dbReference>
<dbReference type="Gene3D" id="3.30.470.30">
    <property type="entry name" value="DNA ligase/mRNA capping enzyme"/>
    <property type="match status" value="1"/>
</dbReference>
<dbReference type="Gene3D" id="1.10.287.610">
    <property type="entry name" value="Helix hairpin bin"/>
    <property type="match status" value="1"/>
</dbReference>
<dbReference type="Gene3D" id="2.40.50.140">
    <property type="entry name" value="Nucleic acid-binding proteins"/>
    <property type="match status" value="1"/>
</dbReference>
<dbReference type="HAMAP" id="MF_01588">
    <property type="entry name" value="DNA_ligase_A"/>
    <property type="match status" value="1"/>
</dbReference>
<dbReference type="InterPro" id="IPR001357">
    <property type="entry name" value="BRCT_dom"/>
</dbReference>
<dbReference type="InterPro" id="IPR036420">
    <property type="entry name" value="BRCT_dom_sf"/>
</dbReference>
<dbReference type="InterPro" id="IPR001679">
    <property type="entry name" value="DNA_ligase"/>
</dbReference>
<dbReference type="InterPro" id="IPR013839">
    <property type="entry name" value="DNAligase_adenylation"/>
</dbReference>
<dbReference type="InterPro" id="IPR013840">
    <property type="entry name" value="DNAligase_N"/>
</dbReference>
<dbReference type="InterPro" id="IPR012340">
    <property type="entry name" value="NA-bd_OB-fold"/>
</dbReference>
<dbReference type="InterPro" id="IPR004150">
    <property type="entry name" value="NAD_DNA_ligase_OB"/>
</dbReference>
<dbReference type="InterPro" id="IPR010994">
    <property type="entry name" value="RuvA_2-like"/>
</dbReference>
<dbReference type="NCBIfam" id="TIGR00575">
    <property type="entry name" value="dnlj"/>
    <property type="match status" value="1"/>
</dbReference>
<dbReference type="NCBIfam" id="NF005932">
    <property type="entry name" value="PRK07956.1"/>
    <property type="match status" value="1"/>
</dbReference>
<dbReference type="NCBIfam" id="NF010930">
    <property type="entry name" value="PRK14350.1"/>
    <property type="match status" value="1"/>
</dbReference>
<dbReference type="Pfam" id="PF00533">
    <property type="entry name" value="BRCT"/>
    <property type="match status" value="1"/>
</dbReference>
<dbReference type="Pfam" id="PF01653">
    <property type="entry name" value="DNA_ligase_aden"/>
    <property type="match status" value="1"/>
</dbReference>
<dbReference type="Pfam" id="PF03120">
    <property type="entry name" value="DNA_ligase_OB"/>
    <property type="match status" value="1"/>
</dbReference>
<dbReference type="PIRSF" id="PIRSF001604">
    <property type="entry name" value="LigA"/>
    <property type="match status" value="1"/>
</dbReference>
<dbReference type="SMART" id="SM00292">
    <property type="entry name" value="BRCT"/>
    <property type="match status" value="1"/>
</dbReference>
<dbReference type="SMART" id="SM00532">
    <property type="entry name" value="LIGANc"/>
    <property type="match status" value="1"/>
</dbReference>
<dbReference type="SUPFAM" id="SSF52113">
    <property type="entry name" value="BRCT domain"/>
    <property type="match status" value="1"/>
</dbReference>
<dbReference type="SUPFAM" id="SSF56091">
    <property type="entry name" value="DNA ligase/mRNA capping enzyme, catalytic domain"/>
    <property type="match status" value="1"/>
</dbReference>
<dbReference type="SUPFAM" id="SSF50249">
    <property type="entry name" value="Nucleic acid-binding proteins"/>
    <property type="match status" value="1"/>
</dbReference>
<dbReference type="SUPFAM" id="SSF47781">
    <property type="entry name" value="RuvA domain 2-like"/>
    <property type="match status" value="1"/>
</dbReference>
<name>DNLJ_BORRA</name>
<feature type="chain" id="PRO_0000380314" description="DNA ligase">
    <location>
        <begin position="1"/>
        <end position="669"/>
    </location>
</feature>
<feature type="domain" description="BRCT" evidence="1">
    <location>
        <begin position="589"/>
        <end position="669"/>
    </location>
</feature>
<feature type="active site" description="N6-AMP-lysine intermediate" evidence="1">
    <location>
        <position position="117"/>
    </location>
</feature>
<feature type="binding site" evidence="1">
    <location>
        <begin position="33"/>
        <end position="37"/>
    </location>
    <ligand>
        <name>NAD(+)</name>
        <dbReference type="ChEBI" id="CHEBI:57540"/>
    </ligand>
</feature>
<feature type="binding site" evidence="1">
    <location>
        <begin position="82"/>
        <end position="83"/>
    </location>
    <ligand>
        <name>NAD(+)</name>
        <dbReference type="ChEBI" id="CHEBI:57540"/>
    </ligand>
</feature>
<feature type="binding site" evidence="1">
    <location>
        <position position="115"/>
    </location>
    <ligand>
        <name>NAD(+)</name>
        <dbReference type="ChEBI" id="CHEBI:57540"/>
    </ligand>
</feature>
<feature type="binding site" evidence="1">
    <location>
        <position position="138"/>
    </location>
    <ligand>
        <name>NAD(+)</name>
        <dbReference type="ChEBI" id="CHEBI:57540"/>
    </ligand>
</feature>
<feature type="binding site" evidence="1">
    <location>
        <position position="172"/>
    </location>
    <ligand>
        <name>NAD(+)</name>
        <dbReference type="ChEBI" id="CHEBI:57540"/>
    </ligand>
</feature>
<feature type="binding site" evidence="1">
    <location>
        <position position="286"/>
    </location>
    <ligand>
        <name>NAD(+)</name>
        <dbReference type="ChEBI" id="CHEBI:57540"/>
    </ligand>
</feature>
<feature type="binding site" evidence="1">
    <location>
        <position position="310"/>
    </location>
    <ligand>
        <name>NAD(+)</name>
        <dbReference type="ChEBI" id="CHEBI:57540"/>
    </ligand>
</feature>
<feature type="binding site" evidence="1">
    <location>
        <position position="401"/>
    </location>
    <ligand>
        <name>Zn(2+)</name>
        <dbReference type="ChEBI" id="CHEBI:29105"/>
    </ligand>
</feature>
<feature type="binding site" evidence="1">
    <location>
        <position position="404"/>
    </location>
    <ligand>
        <name>Zn(2+)</name>
        <dbReference type="ChEBI" id="CHEBI:29105"/>
    </ligand>
</feature>
<feature type="binding site" evidence="1">
    <location>
        <position position="417"/>
    </location>
    <ligand>
        <name>Zn(2+)</name>
        <dbReference type="ChEBI" id="CHEBI:29105"/>
    </ligand>
</feature>
<feature type="binding site" evidence="1">
    <location>
        <position position="422"/>
    </location>
    <ligand>
        <name>Zn(2+)</name>
        <dbReference type="ChEBI" id="CHEBI:29105"/>
    </ligand>
</feature>